<comment type="function">
    <text>Core component of nucleosome. Nucleosomes wrap and compact DNA into chromatin, limiting DNA accessibility to the cellular machineries which require DNA as a template. Histones thereby play a central role in transcription regulation, DNA repair, DNA replication and chromosomal stability. DNA accessibility is regulated via a complex set of post-translational modifications of histones, also called histone code, and nucleosome remodeling.</text>
</comment>
<comment type="subunit">
    <text>The nucleosome is a histone octamer containing two molecules each of H2A, H2B, H3 and H4 assembled in one H3-H4 heterotetramer and two H2A-H2B heterodimers. The octamer wraps approximately 147 bp of DNA.</text>
</comment>
<comment type="subcellular location">
    <subcellularLocation>
        <location evidence="1">Nucleus</location>
    </subcellularLocation>
    <subcellularLocation>
        <location evidence="1">Chromosome</location>
    </subcellularLocation>
</comment>
<comment type="PTM">
    <text evidence="1">Phosphorylated to form H3S10ph. H3S10ph promotes subsequent H3K14ac formation and is required for transcriptional activation through TBP recruitment to the promoters (By similarity).</text>
</comment>
<comment type="PTM">
    <text evidence="1">Mono-, di- and trimethylated by the COMPASS complex to form H3K4me1/2/3. H3K4me activates gene expression by regulating transcription elongation and plays a role in telomere length maintenance. H3K4me enrichment correlates with transcription levels, and occurs in a 5' to 3' gradient with H3K4me3 enrichment at the 5'-end of genes, shifting to H3K4me2 and then H3K4me1. Methylated by set2 to form H3K36me. H3K36me represses gene expression. Methylated by dot1 to form H3K79me. H3K79me is required for association of SIR proteins with telomeric regions and for telomeric silencing. The COMPASS-mediated formation of H3K4me2/3 and the dot1-mediated formation of H3K79me require H2BK123ub1 (By similarity).</text>
</comment>
<comment type="PTM">
    <text evidence="1">Acetylation of histone H3 leads to transcriptional activation. H3K14ac formation by gcn5 is promoted by H3S10ph. H3K14ac can also be formed by esa1. H3K56ac formation occurs predominantly in newly synthesized H3 molecules during G1, S and G2/M of the cell cycle and may be involved in DNA repair (By similarity).</text>
</comment>
<comment type="similarity">
    <text evidence="3">Belongs to the histone H3 family.</text>
</comment>
<comment type="caution">
    <text evidence="3">To ensure consistency between histone entries, we follow the 'Brno' nomenclature for histone modifications, with positions referring to those used in the literature for the 'closest' model organism. Due to slight variations in histone sequences between organisms and to the presence of initiator methionine in UniProtKB/Swiss-Prot sequences, the actual positions of modified amino acids in the sequence generally differ. In this entry the following conventions are used: H3K4me1/2/3 = mono-, di- and trimethylated Lys-5; H3K9ac = acetylated Lys-10; H3K9me1 = monomethylated Lys-10; H3S10ph = phosphorylated Ser-11; H3K14ac = acetylated Lys-15; H3K14me2 = dimethylated Lys-15; H3K18ac = acetylated Lys-19; H3K18me1 = monomethylated Lys-19; H3K23ac = acetylated Lys-24; H3K23me1 = monomethylated Lys-24; H3K27ac = acetylated Lys-28; H3K27me1/2/3 = mono-, di- and trimethylated Lys-28; H3K36ac = acetylated Lys-37; H3K36me1/2/3 = mono-, di- and trimethylated Lys-37; H3K56ac = acetylated Lys-57; H3K64ac = acetylated Lys-65; H3K79me1/2/3 = mono-, di- and trimethylated Lys-80.</text>
</comment>
<evidence type="ECO:0000250" key="1"/>
<evidence type="ECO:0000256" key="2">
    <source>
        <dbReference type="SAM" id="MobiDB-lite"/>
    </source>
</evidence>
<evidence type="ECO:0000305" key="3"/>
<name>H3_ASPNC</name>
<protein>
    <recommendedName>
        <fullName>Histone H3</fullName>
    </recommendedName>
</protein>
<feature type="initiator methionine" description="Removed" evidence="1">
    <location>
        <position position="1"/>
    </location>
</feature>
<feature type="chain" id="PRO_0000297743" description="Histone H3">
    <location>
        <begin position="2"/>
        <end position="136"/>
    </location>
</feature>
<feature type="region of interest" description="Disordered" evidence="2">
    <location>
        <begin position="1"/>
        <end position="43"/>
    </location>
</feature>
<feature type="modified residue" description="N6,N6,N6-trimethyllysine; alternate" evidence="1">
    <location>
        <position position="5"/>
    </location>
</feature>
<feature type="modified residue" description="N6,N6-dimethyllysine; alternate" evidence="1">
    <location>
        <position position="5"/>
    </location>
</feature>
<feature type="modified residue" description="N6-methyllysine; alternate" evidence="1">
    <location>
        <position position="5"/>
    </location>
</feature>
<feature type="modified residue" description="N6-acetyllysine; alternate" evidence="1">
    <location>
        <position position="10"/>
    </location>
</feature>
<feature type="modified residue" description="N6-methyllysine; alternate" evidence="1">
    <location>
        <position position="10"/>
    </location>
</feature>
<feature type="modified residue" description="Phosphoserine" evidence="1">
    <location>
        <position position="11"/>
    </location>
</feature>
<feature type="modified residue" description="N6,N6-dimethyllysine; alternate" evidence="1">
    <location>
        <position position="15"/>
    </location>
</feature>
<feature type="modified residue" description="N6-acetyllysine; alternate" evidence="1">
    <location>
        <position position="15"/>
    </location>
</feature>
<feature type="modified residue" description="N6-acetyllysine; alternate" evidence="1">
    <location>
        <position position="19"/>
    </location>
</feature>
<feature type="modified residue" description="N6-methyllysine; alternate" evidence="1">
    <location>
        <position position="19"/>
    </location>
</feature>
<feature type="modified residue" description="N6-acetyllysine; alternate" evidence="1">
    <location>
        <position position="24"/>
    </location>
</feature>
<feature type="modified residue" description="N6-methyllysine; alternate" evidence="1">
    <location>
        <position position="24"/>
    </location>
</feature>
<feature type="modified residue" description="N6,N6,N6-trimethyllysine; alternate" evidence="1">
    <location>
        <position position="28"/>
    </location>
</feature>
<feature type="modified residue" description="N6,N6-dimethyllysine; alternate" evidence="1">
    <location>
        <position position="28"/>
    </location>
</feature>
<feature type="modified residue" description="N6-acetyllysine; alternate" evidence="1">
    <location>
        <position position="28"/>
    </location>
</feature>
<feature type="modified residue" description="N6-methyllysine; alternate" evidence="1">
    <location>
        <position position="28"/>
    </location>
</feature>
<feature type="modified residue" description="N6,N6,N6-trimethyllysine; alternate" evidence="1">
    <location>
        <position position="37"/>
    </location>
</feature>
<feature type="modified residue" description="N6,N6-dimethyllysine; alternate" evidence="1">
    <location>
        <position position="37"/>
    </location>
</feature>
<feature type="modified residue" description="N6-acetyllysine; alternate" evidence="1">
    <location>
        <position position="37"/>
    </location>
</feature>
<feature type="modified residue" description="N6-methyllysine; alternate" evidence="1">
    <location>
        <position position="37"/>
    </location>
</feature>
<feature type="modified residue" description="N6-acetyllysine" evidence="1">
    <location>
        <position position="57"/>
    </location>
</feature>
<feature type="modified residue" description="N6-acetyllysine" evidence="1">
    <location>
        <position position="65"/>
    </location>
</feature>
<feature type="modified residue" description="N6,N6,N6-trimethyllysine; alternate" evidence="1">
    <location>
        <position position="80"/>
    </location>
</feature>
<feature type="modified residue" description="N6,N6-dimethyllysine; alternate" evidence="1">
    <location>
        <position position="80"/>
    </location>
</feature>
<feature type="modified residue" description="N6-methyllysine; alternate" evidence="1">
    <location>
        <position position="80"/>
    </location>
</feature>
<keyword id="KW-0007">Acetylation</keyword>
<keyword id="KW-0158">Chromosome</keyword>
<keyword id="KW-0238">DNA-binding</keyword>
<keyword id="KW-0488">Methylation</keyword>
<keyword id="KW-0544">Nucleosome core</keyword>
<keyword id="KW-0539">Nucleus</keyword>
<keyword id="KW-0597">Phosphoprotein</keyword>
<keyword id="KW-1185">Reference proteome</keyword>
<reference key="1">
    <citation type="journal article" date="2007" name="Nat. Biotechnol.">
        <title>Genome sequencing and analysis of the versatile cell factory Aspergillus niger CBS 513.88.</title>
        <authorList>
            <person name="Pel H.J."/>
            <person name="de Winde J.H."/>
            <person name="Archer D.B."/>
            <person name="Dyer P.S."/>
            <person name="Hofmann G."/>
            <person name="Schaap P.J."/>
            <person name="Turner G."/>
            <person name="de Vries R.P."/>
            <person name="Albang R."/>
            <person name="Albermann K."/>
            <person name="Andersen M.R."/>
            <person name="Bendtsen J.D."/>
            <person name="Benen J.A.E."/>
            <person name="van den Berg M."/>
            <person name="Breestraat S."/>
            <person name="Caddick M.X."/>
            <person name="Contreras R."/>
            <person name="Cornell M."/>
            <person name="Coutinho P.M."/>
            <person name="Danchin E.G.J."/>
            <person name="Debets A.J.M."/>
            <person name="Dekker P."/>
            <person name="van Dijck P.W.M."/>
            <person name="van Dijk A."/>
            <person name="Dijkhuizen L."/>
            <person name="Driessen A.J.M."/>
            <person name="d'Enfert C."/>
            <person name="Geysens S."/>
            <person name="Goosen C."/>
            <person name="Groot G.S.P."/>
            <person name="de Groot P.W.J."/>
            <person name="Guillemette T."/>
            <person name="Henrissat B."/>
            <person name="Herweijer M."/>
            <person name="van den Hombergh J.P.T.W."/>
            <person name="van den Hondel C.A.M.J.J."/>
            <person name="van der Heijden R.T.J.M."/>
            <person name="van der Kaaij R.M."/>
            <person name="Klis F.M."/>
            <person name="Kools H.J."/>
            <person name="Kubicek C.P."/>
            <person name="van Kuyk P.A."/>
            <person name="Lauber J."/>
            <person name="Lu X."/>
            <person name="van der Maarel M.J.E.C."/>
            <person name="Meulenberg R."/>
            <person name="Menke H."/>
            <person name="Mortimer M.A."/>
            <person name="Nielsen J."/>
            <person name="Oliver S.G."/>
            <person name="Olsthoorn M."/>
            <person name="Pal K."/>
            <person name="van Peij N.N.M.E."/>
            <person name="Ram A.F.J."/>
            <person name="Rinas U."/>
            <person name="Roubos J.A."/>
            <person name="Sagt C.M.J."/>
            <person name="Schmoll M."/>
            <person name="Sun J."/>
            <person name="Ussery D."/>
            <person name="Varga J."/>
            <person name="Vervecken W."/>
            <person name="van de Vondervoort P.J.J."/>
            <person name="Wedler H."/>
            <person name="Woesten H.A.B."/>
            <person name="Zeng A.-P."/>
            <person name="van Ooyen A.J.J."/>
            <person name="Visser J."/>
            <person name="Stam H."/>
        </authorList>
    </citation>
    <scope>NUCLEOTIDE SEQUENCE [LARGE SCALE GENOMIC DNA]</scope>
    <source>
        <strain>ATCC MYA-4892 / CBS 513.88 / FGSC A1513</strain>
    </source>
</reference>
<proteinExistence type="inferred from homology"/>
<sequence length="136" mass="15333">MARTKQTARKSTGGKAPRKQLASKAARKAAPSTGGVKKPHRYKPGTVALREIRRYQKSTELLIRKLPFQRLVREIAQDFKSDLRFQSSAIGALQESVEAYLVSLFEDTNLCAIHAKRVTIQSKDIQLARRLRGERS</sequence>
<gene>
    <name type="primary">hht1</name>
    <name type="ORF">An08g06960</name>
</gene>
<organism>
    <name type="scientific">Aspergillus niger (strain ATCC MYA-4892 / CBS 513.88 / FGSC A1513)</name>
    <dbReference type="NCBI Taxonomy" id="425011"/>
    <lineage>
        <taxon>Eukaryota</taxon>
        <taxon>Fungi</taxon>
        <taxon>Dikarya</taxon>
        <taxon>Ascomycota</taxon>
        <taxon>Pezizomycotina</taxon>
        <taxon>Eurotiomycetes</taxon>
        <taxon>Eurotiomycetidae</taxon>
        <taxon>Eurotiales</taxon>
        <taxon>Aspergillaceae</taxon>
        <taxon>Aspergillus</taxon>
        <taxon>Aspergillus subgen. Circumdati</taxon>
    </lineage>
</organism>
<dbReference type="EMBL" id="AM270170">
    <property type="protein sequence ID" value="CAK45666.1"/>
    <property type="molecule type" value="Genomic_DNA"/>
</dbReference>
<dbReference type="RefSeq" id="XP_001392811.1">
    <property type="nucleotide sequence ID" value="XM_001392774.2"/>
</dbReference>
<dbReference type="BMRB" id="A2QRR5"/>
<dbReference type="SMR" id="A2QRR5"/>
<dbReference type="EnsemblFungi" id="CAK45666">
    <property type="protein sequence ID" value="CAK45666"/>
    <property type="gene ID" value="An08g06960"/>
</dbReference>
<dbReference type="GeneID" id="4983013"/>
<dbReference type="KEGG" id="ang:An08g06960"/>
<dbReference type="VEuPathDB" id="FungiDB:An08g06960"/>
<dbReference type="HOGENOM" id="CLU_078295_4_0_1"/>
<dbReference type="Proteomes" id="UP000006706">
    <property type="component" value="Chromosome 8R"/>
</dbReference>
<dbReference type="GO" id="GO:0000786">
    <property type="term" value="C:nucleosome"/>
    <property type="evidence" value="ECO:0007669"/>
    <property type="project" value="UniProtKB-KW"/>
</dbReference>
<dbReference type="GO" id="GO:0005634">
    <property type="term" value="C:nucleus"/>
    <property type="evidence" value="ECO:0007669"/>
    <property type="project" value="UniProtKB-SubCell"/>
</dbReference>
<dbReference type="GO" id="GO:0003677">
    <property type="term" value="F:DNA binding"/>
    <property type="evidence" value="ECO:0007669"/>
    <property type="project" value="UniProtKB-KW"/>
</dbReference>
<dbReference type="GO" id="GO:0046982">
    <property type="term" value="F:protein heterodimerization activity"/>
    <property type="evidence" value="ECO:0007669"/>
    <property type="project" value="InterPro"/>
</dbReference>
<dbReference type="GO" id="GO:0030527">
    <property type="term" value="F:structural constituent of chromatin"/>
    <property type="evidence" value="ECO:0007669"/>
    <property type="project" value="InterPro"/>
</dbReference>
<dbReference type="CDD" id="cd22911">
    <property type="entry name" value="HFD_H3"/>
    <property type="match status" value="1"/>
</dbReference>
<dbReference type="FunFam" id="1.10.20.10:FF:000010">
    <property type="entry name" value="Histone H3"/>
    <property type="match status" value="1"/>
</dbReference>
<dbReference type="Gene3D" id="1.10.20.10">
    <property type="entry name" value="Histone, subunit A"/>
    <property type="match status" value="1"/>
</dbReference>
<dbReference type="InterPro" id="IPR009072">
    <property type="entry name" value="Histone-fold"/>
</dbReference>
<dbReference type="InterPro" id="IPR007125">
    <property type="entry name" value="Histone_H2A/H2B/H3"/>
</dbReference>
<dbReference type="InterPro" id="IPR000164">
    <property type="entry name" value="Histone_H3/CENP-A"/>
</dbReference>
<dbReference type="PANTHER" id="PTHR11426">
    <property type="entry name" value="HISTONE H3"/>
    <property type="match status" value="1"/>
</dbReference>
<dbReference type="Pfam" id="PF00125">
    <property type="entry name" value="Histone"/>
    <property type="match status" value="1"/>
</dbReference>
<dbReference type="PRINTS" id="PR00622">
    <property type="entry name" value="HISTONEH3"/>
</dbReference>
<dbReference type="SMART" id="SM00428">
    <property type="entry name" value="H3"/>
    <property type="match status" value="1"/>
</dbReference>
<dbReference type="SUPFAM" id="SSF47113">
    <property type="entry name" value="Histone-fold"/>
    <property type="match status" value="1"/>
</dbReference>
<dbReference type="PROSITE" id="PS00322">
    <property type="entry name" value="HISTONE_H3_1"/>
    <property type="match status" value="1"/>
</dbReference>
<dbReference type="PROSITE" id="PS00959">
    <property type="entry name" value="HISTONE_H3_2"/>
    <property type="match status" value="1"/>
</dbReference>
<accession>A2QRR5</accession>